<organism>
    <name type="scientific">Rattus norvegicus</name>
    <name type="common">Rat</name>
    <dbReference type="NCBI Taxonomy" id="10116"/>
    <lineage>
        <taxon>Eukaryota</taxon>
        <taxon>Metazoa</taxon>
        <taxon>Chordata</taxon>
        <taxon>Craniata</taxon>
        <taxon>Vertebrata</taxon>
        <taxon>Euteleostomi</taxon>
        <taxon>Mammalia</taxon>
        <taxon>Eutheria</taxon>
        <taxon>Euarchontoglires</taxon>
        <taxon>Glires</taxon>
        <taxon>Rodentia</taxon>
        <taxon>Myomorpha</taxon>
        <taxon>Muroidea</taxon>
        <taxon>Muridae</taxon>
        <taxon>Murinae</taxon>
        <taxon>Rattus</taxon>
    </lineage>
</organism>
<evidence type="ECO:0000250" key="1"/>
<evidence type="ECO:0000250" key="2">
    <source>
        <dbReference type="UniProtKB" id="P49757"/>
    </source>
</evidence>
<evidence type="ECO:0000250" key="3">
    <source>
        <dbReference type="UniProtKB" id="Q9QZS3"/>
    </source>
</evidence>
<evidence type="ECO:0000255" key="4">
    <source>
        <dbReference type="PROSITE-ProRule" id="PRU00148"/>
    </source>
</evidence>
<evidence type="ECO:0000256" key="5">
    <source>
        <dbReference type="SAM" id="MobiDB-lite"/>
    </source>
</evidence>
<evidence type="ECO:0000269" key="6">
    <source>
    </source>
</evidence>
<evidence type="ECO:0000303" key="7">
    <source>
    </source>
</evidence>
<evidence type="ECO:0000305" key="8"/>
<evidence type="ECO:0007744" key="9">
    <source>
    </source>
</evidence>
<name>NUMB_RAT</name>
<dbReference type="EMBL" id="BC166596">
    <property type="protein sequence ID" value="AAI66596.1"/>
    <property type="molecule type" value="mRNA"/>
</dbReference>
<dbReference type="EMBL" id="DQ336705">
    <property type="protein sequence ID" value="ABC69737.1"/>
    <property type="molecule type" value="mRNA"/>
</dbReference>
<dbReference type="SMR" id="Q2LC84"/>
<dbReference type="FunCoup" id="Q2LC84">
    <property type="interactions" value="2824"/>
</dbReference>
<dbReference type="IntAct" id="Q2LC84">
    <property type="interactions" value="20"/>
</dbReference>
<dbReference type="MINT" id="Q2LC84"/>
<dbReference type="STRING" id="10116.ENSRNOP00000048410"/>
<dbReference type="iPTMnet" id="Q2LC84"/>
<dbReference type="PhosphoSitePlus" id="Q2LC84"/>
<dbReference type="PaxDb" id="10116-ENSRNOP00000048410"/>
<dbReference type="AGR" id="RGD:620107"/>
<dbReference type="RGD" id="620107">
    <property type="gene designation" value="Numb"/>
</dbReference>
<dbReference type="eggNOG" id="KOG3537">
    <property type="taxonomic scope" value="Eukaryota"/>
</dbReference>
<dbReference type="InParanoid" id="Q2LC84"/>
<dbReference type="Reactome" id="R-RNO-437239">
    <property type="pathway name" value="Recycling pathway of L1"/>
</dbReference>
<dbReference type="Reactome" id="R-RNO-5610780">
    <property type="pathway name" value="Degradation of GLI1 by the proteasome"/>
</dbReference>
<dbReference type="Reactome" id="R-RNO-5632684">
    <property type="pathway name" value="Hedgehog 'on' state"/>
</dbReference>
<dbReference type="PRO" id="PR:Q2LC84"/>
<dbReference type="Proteomes" id="UP000002494">
    <property type="component" value="Unplaced"/>
</dbReference>
<dbReference type="GO" id="GO:0045177">
    <property type="term" value="C:apical part of cell"/>
    <property type="evidence" value="ECO:0000314"/>
    <property type="project" value="RGD"/>
</dbReference>
<dbReference type="GO" id="GO:0016323">
    <property type="term" value="C:basolateral plasma membrane"/>
    <property type="evidence" value="ECO:0000266"/>
    <property type="project" value="RGD"/>
</dbReference>
<dbReference type="GO" id="GO:0005905">
    <property type="term" value="C:clathrin-coated pit"/>
    <property type="evidence" value="ECO:0000266"/>
    <property type="project" value="RGD"/>
</dbReference>
<dbReference type="GO" id="GO:0030136">
    <property type="term" value="C:clathrin-coated vesicle"/>
    <property type="evidence" value="ECO:0000266"/>
    <property type="project" value="RGD"/>
</dbReference>
<dbReference type="GO" id="GO:0005737">
    <property type="term" value="C:cytoplasm"/>
    <property type="evidence" value="ECO:0000318"/>
    <property type="project" value="GO_Central"/>
</dbReference>
<dbReference type="GO" id="GO:0031410">
    <property type="term" value="C:cytoplasmic vesicle"/>
    <property type="evidence" value="ECO:0000266"/>
    <property type="project" value="RGD"/>
</dbReference>
<dbReference type="GO" id="GO:0043197">
    <property type="term" value="C:dendritic spine"/>
    <property type="evidence" value="ECO:0000314"/>
    <property type="project" value="RGD"/>
</dbReference>
<dbReference type="GO" id="GO:0005769">
    <property type="term" value="C:early endosome"/>
    <property type="evidence" value="ECO:0000266"/>
    <property type="project" value="RGD"/>
</dbReference>
<dbReference type="GO" id="GO:0010008">
    <property type="term" value="C:endosome membrane"/>
    <property type="evidence" value="ECO:0007669"/>
    <property type="project" value="UniProtKB-SubCell"/>
</dbReference>
<dbReference type="GO" id="GO:0098978">
    <property type="term" value="C:glutamatergic synapse"/>
    <property type="evidence" value="ECO:0000314"/>
    <property type="project" value="SynGO"/>
</dbReference>
<dbReference type="GO" id="GO:0014069">
    <property type="term" value="C:postsynaptic density"/>
    <property type="evidence" value="ECO:0000314"/>
    <property type="project" value="SynGO"/>
</dbReference>
<dbReference type="GO" id="GO:0045294">
    <property type="term" value="F:alpha-catenin binding"/>
    <property type="evidence" value="ECO:0000266"/>
    <property type="project" value="RGD"/>
</dbReference>
<dbReference type="GO" id="GO:0008013">
    <property type="term" value="F:beta-catenin binding"/>
    <property type="evidence" value="ECO:0000266"/>
    <property type="project" value="RGD"/>
</dbReference>
<dbReference type="GO" id="GO:0045296">
    <property type="term" value="F:cadherin binding"/>
    <property type="evidence" value="ECO:0000266"/>
    <property type="project" value="RGD"/>
</dbReference>
<dbReference type="GO" id="GO:0034332">
    <property type="term" value="P:adherens junction organization"/>
    <property type="evidence" value="ECO:0000266"/>
    <property type="project" value="RGD"/>
</dbReference>
<dbReference type="GO" id="GO:0007409">
    <property type="term" value="P:axonogenesis"/>
    <property type="evidence" value="ECO:0000266"/>
    <property type="project" value="RGD"/>
</dbReference>
<dbReference type="GO" id="GO:0030154">
    <property type="term" value="P:cell differentiation"/>
    <property type="evidence" value="ECO:0000303"/>
    <property type="project" value="RGD"/>
</dbReference>
<dbReference type="GO" id="GO:0030900">
    <property type="term" value="P:forebrain development"/>
    <property type="evidence" value="ECO:0000266"/>
    <property type="project" value="RGD"/>
</dbReference>
<dbReference type="GO" id="GO:0021670">
    <property type="term" value="P:lateral ventricle development"/>
    <property type="evidence" value="ECO:0000266"/>
    <property type="project" value="RGD"/>
</dbReference>
<dbReference type="GO" id="GO:1903077">
    <property type="term" value="P:negative regulation of protein localization to plasma membrane"/>
    <property type="evidence" value="ECO:0000266"/>
    <property type="project" value="RGD"/>
</dbReference>
<dbReference type="GO" id="GO:0007399">
    <property type="term" value="P:nervous system development"/>
    <property type="evidence" value="ECO:0000266"/>
    <property type="project" value="RGD"/>
</dbReference>
<dbReference type="GO" id="GO:0021849">
    <property type="term" value="P:neuroblast division in subventricular zone"/>
    <property type="evidence" value="ECO:0000266"/>
    <property type="project" value="RGD"/>
</dbReference>
<dbReference type="GO" id="GO:0007405">
    <property type="term" value="P:neuroblast proliferation"/>
    <property type="evidence" value="ECO:0000266"/>
    <property type="project" value="RGD"/>
</dbReference>
<dbReference type="GO" id="GO:0030335">
    <property type="term" value="P:positive regulation of cell migration"/>
    <property type="evidence" value="ECO:0000266"/>
    <property type="project" value="RGD"/>
</dbReference>
<dbReference type="GO" id="GO:0050775">
    <property type="term" value="P:positive regulation of dendrite morphogenesis"/>
    <property type="evidence" value="ECO:0000315"/>
    <property type="project" value="RGD"/>
</dbReference>
<dbReference type="GO" id="GO:0050769">
    <property type="term" value="P:positive regulation of neurogenesis"/>
    <property type="evidence" value="ECO:0000266"/>
    <property type="project" value="RGD"/>
</dbReference>
<dbReference type="GO" id="GO:0045664">
    <property type="term" value="P:regulation of neuron differentiation"/>
    <property type="evidence" value="ECO:0000315"/>
    <property type="project" value="RGD"/>
</dbReference>
<dbReference type="GO" id="GO:0150052">
    <property type="term" value="P:regulation of postsynapse assembly"/>
    <property type="evidence" value="ECO:0000314"/>
    <property type="project" value="SynGO"/>
</dbReference>
<dbReference type="GO" id="GO:0099149">
    <property type="term" value="P:regulation of postsynaptic neurotransmitter receptor internalization"/>
    <property type="evidence" value="ECO:0000266"/>
    <property type="project" value="RGD"/>
</dbReference>
<dbReference type="CDD" id="cd01268">
    <property type="entry name" value="PTB_Numb"/>
    <property type="match status" value="1"/>
</dbReference>
<dbReference type="FunFam" id="2.30.29.30:FF:000031">
    <property type="entry name" value="protein numb isoform X1"/>
    <property type="match status" value="1"/>
</dbReference>
<dbReference type="Gene3D" id="2.30.29.30">
    <property type="entry name" value="Pleckstrin-homology domain (PH domain)/Phosphotyrosine-binding domain (PTB)"/>
    <property type="match status" value="1"/>
</dbReference>
<dbReference type="InterPro" id="IPR016698">
    <property type="entry name" value="Numb/numb-like"/>
</dbReference>
<dbReference type="InterPro" id="IPR010449">
    <property type="entry name" value="Numb_domain"/>
</dbReference>
<dbReference type="InterPro" id="IPR011993">
    <property type="entry name" value="PH-like_dom_sf"/>
</dbReference>
<dbReference type="InterPro" id="IPR006020">
    <property type="entry name" value="PTB/PI_dom"/>
</dbReference>
<dbReference type="PANTHER" id="PTHR47368">
    <property type="entry name" value="NUMB"/>
    <property type="match status" value="1"/>
</dbReference>
<dbReference type="PANTHER" id="PTHR47368:SF5">
    <property type="entry name" value="PROTEIN NUMB HOMOLOG"/>
    <property type="match status" value="1"/>
</dbReference>
<dbReference type="Pfam" id="PF06311">
    <property type="entry name" value="NumbF"/>
    <property type="match status" value="1"/>
</dbReference>
<dbReference type="Pfam" id="PF00640">
    <property type="entry name" value="PID"/>
    <property type="match status" value="1"/>
</dbReference>
<dbReference type="PIRSF" id="PIRSF017607">
    <property type="entry name" value="Numb/numb-like"/>
    <property type="match status" value="1"/>
</dbReference>
<dbReference type="SMART" id="SM00462">
    <property type="entry name" value="PTB"/>
    <property type="match status" value="1"/>
</dbReference>
<dbReference type="SUPFAM" id="SSF50729">
    <property type="entry name" value="PH domain-like"/>
    <property type="match status" value="1"/>
</dbReference>
<dbReference type="PROSITE" id="PS01179">
    <property type="entry name" value="PID"/>
    <property type="match status" value="1"/>
</dbReference>
<proteinExistence type="evidence at protein level"/>
<accession>Q2LC84</accession>
<accession>B2GVA9</accession>
<accession>F1MAI8</accession>
<reference key="1">
    <citation type="submission" date="2005-12" db="EMBL/GenBank/DDBJ databases">
        <authorList>
            <person name="Kwon S.H."/>
            <person name="Reichardt H.M."/>
        </authorList>
    </citation>
    <scope>NUCLEOTIDE SEQUENCE [MRNA] (ISOFORM 1)</scope>
    <source>
        <strain>Lewis</strain>
        <tissue>Kidney</tissue>
    </source>
</reference>
<reference key="2">
    <citation type="journal article" date="2004" name="Genome Res.">
        <title>The status, quality, and expansion of the NIH full-length cDNA project: the Mammalian Gene Collection (MGC).</title>
        <authorList>
            <consortium name="The MGC Project Team"/>
        </authorList>
    </citation>
    <scope>NUCLEOTIDE SEQUENCE [LARGE SCALE MRNA] (ISOFORM 2)</scope>
    <source>
        <tissue>Prostate</tissue>
    </source>
</reference>
<reference key="3">
    <citation type="journal article" date="2006" name="FEBS Lett.">
        <title>Phosphorylation of Numb regulates its interaction with the clathrin-associated adaptor AP-2.</title>
        <authorList>
            <person name="Tokumitsu H."/>
            <person name="Hatano N."/>
            <person name="Yokokura S."/>
            <person name="Sueyoshi Y."/>
            <person name="Nozaki N."/>
            <person name="Kobayashi R."/>
        </authorList>
    </citation>
    <scope>INTERACTION WITH TFAP2A AND TFAP2B</scope>
    <scope>PHOSPHORYLATION AT SER-275 AND SER-294</scope>
    <scope>MUTAGENESIS OF SER-275 AND SER-294</scope>
</reference>
<reference key="4">
    <citation type="journal article" date="2012" name="Nat. Commun.">
        <title>Quantitative maps of protein phosphorylation sites across 14 different rat organs and tissues.</title>
        <authorList>
            <person name="Lundby A."/>
            <person name="Secher A."/>
            <person name="Lage K."/>
            <person name="Nordsborg N.B."/>
            <person name="Dmytriyev A."/>
            <person name="Lundby C."/>
            <person name="Olsen J.V."/>
        </authorList>
    </citation>
    <scope>PHOSPHORYLATION [LARGE SCALE ANALYSIS] AT SER-439 AND SER-635</scope>
    <scope>IDENTIFICATION BY MASS SPECTROMETRY [LARGE SCALE ANALYSIS]</scope>
</reference>
<sequence>MNKLRQSFRRKKDVYVPEASRPHQWQTDEEGVRTGKCSFPVKYLGHVEVDESRGMHICEDAVKRLKAERKFFKGFFGKTGKKAVKAVLWVSADGLRVVDEKTKDLIVDQTIEKVSFCAPDRNFDRAFSYICRDGTTRRWICHCFMAVKDTGERLSHAVGCAFAACLERKQKREKECGVTATFDASRTTFTREGSFRVTTATEQAEREEIMKQLQDAKKAETDKTVGPSVAPGNSAPSPSSPTSPTLDPTASLEMNNPHAIPRRHAPIEQLARQGSFRGFPALSQKMSPFKRQLSLRINELPSTMQRKTDFPIKNTVPEVEGEAESISSLCSQITSAFSTPCEDPFSSAPMTKPVTLVAPQSPVLQANGTDSALHVLTAKPASTALAPVAMPVRETNPWAHAPDAANKEIAAIHSGTEWGQSSGAASPGLFQAGHRRTPSEADRWLEEVSKSVRAQQPQASAAPLQPVLQPPPPAAIAPPAPPFQGHAFLTSQPVPVGVVPPLQPAFVSTQSYPVANGMPYPASNVPVVGITPSQMVANVFGTAGHPQATHPHQSPSLAKQQTFPQYETSSATTSPFFKPSAQHLNGSAAFNGVDNSGLVSGNRPAQVPPGTCPVDPFEAQWAALESKPKQRTNPSPTNPFSSDAQKAFEIEL</sequence>
<feature type="chain" id="PRO_0000412901" description="Protein numb homolog">
    <location>
        <begin position="1"/>
        <end position="652"/>
    </location>
</feature>
<feature type="domain" description="PID" evidence="4">
    <location>
        <begin position="37"/>
        <end position="173"/>
    </location>
</feature>
<feature type="region of interest" description="Disordered" evidence="5">
    <location>
        <begin position="213"/>
        <end position="256"/>
    </location>
</feature>
<feature type="region of interest" description="Disordered" evidence="5">
    <location>
        <begin position="418"/>
        <end position="440"/>
    </location>
</feature>
<feature type="region of interest" description="Disordered" evidence="5">
    <location>
        <begin position="543"/>
        <end position="580"/>
    </location>
</feature>
<feature type="region of interest" description="Disordered" evidence="5">
    <location>
        <begin position="624"/>
        <end position="652"/>
    </location>
</feature>
<feature type="compositionally biased region" description="Basic and acidic residues" evidence="5">
    <location>
        <begin position="213"/>
        <end position="223"/>
    </location>
</feature>
<feature type="compositionally biased region" description="Low complexity" evidence="5">
    <location>
        <begin position="227"/>
        <end position="251"/>
    </location>
</feature>
<feature type="compositionally biased region" description="Polar residues" evidence="5">
    <location>
        <begin position="550"/>
        <end position="575"/>
    </location>
</feature>
<feature type="compositionally biased region" description="Polar residues" evidence="5">
    <location>
        <begin position="631"/>
        <end position="644"/>
    </location>
</feature>
<feature type="modified residue" description="Phosphothreonine" evidence="2">
    <location>
        <position position="102"/>
    </location>
</feature>
<feature type="modified residue" description="Phosphoserine" evidence="2">
    <location>
        <position position="194"/>
    </location>
</feature>
<feature type="modified residue" description="Phosphothreonine" evidence="3">
    <location>
        <position position="242"/>
    </location>
</feature>
<feature type="modified residue" description="Phosphoserine" evidence="2">
    <location>
        <position position="243"/>
    </location>
</feature>
<feature type="modified residue" description="Phosphoserine; by CaMK1" evidence="6">
    <location>
        <position position="275"/>
    </location>
</feature>
<feature type="modified residue" description="Phosphoserine; by CaMK1" evidence="6">
    <location>
        <position position="294"/>
    </location>
</feature>
<feature type="modified residue" description="Phosphoserine" evidence="2">
    <location>
        <position position="426"/>
    </location>
</feature>
<feature type="modified residue" description="Phosphothreonine" evidence="2">
    <location>
        <position position="437"/>
    </location>
</feature>
<feature type="modified residue" description="Phosphoserine" evidence="9">
    <location>
        <position position="439"/>
    </location>
</feature>
<feature type="modified residue" description="Phosphoserine" evidence="9">
    <location>
        <position position="635"/>
    </location>
</feature>
<feature type="splice variant" id="VSP_041811" description="In isoform 2." evidence="7">
    <location>
        <begin position="68"/>
        <end position="78"/>
    </location>
</feature>
<feature type="mutagenesis site" description="Loss of phosphorylation by CaMK1." evidence="6">
    <original>S</original>
    <variation>A</variation>
    <location>
        <position position="275"/>
    </location>
</feature>
<feature type="mutagenesis site" description="Loss of phosphorylation by CaMK1." evidence="6">
    <original>S</original>
    <variation>A</variation>
    <location>
        <position position="294"/>
    </location>
</feature>
<feature type="sequence conflict" description="In Ref. 1; ABC69737." evidence="8" ref="1">
    <original>A</original>
    <variation>V</variation>
    <location>
        <position position="459"/>
    </location>
</feature>
<keyword id="KW-0025">Alternative splicing</keyword>
<keyword id="KW-1003">Cell membrane</keyword>
<keyword id="KW-0217">Developmental protein</keyword>
<keyword id="KW-0967">Endosome</keyword>
<keyword id="KW-0472">Membrane</keyword>
<keyword id="KW-0524">Neurogenesis</keyword>
<keyword id="KW-0597">Phosphoprotein</keyword>
<keyword id="KW-1185">Reference proteome</keyword>
<keyword id="KW-0832">Ubl conjugation</keyword>
<comment type="function">
    <text evidence="2 3">Regulates clathrin-mediated receptor endocytosis (By similarity). Plays a role in the process of neurogenesis. Required throughout embryonic neurogenesis to maintain neural progenitor cells, also called radial glial cells (RGCs), by allowing their daughter cells to choose progenitor over neuronal cell fate. Not required for the proliferation of neural progenitor cells before the onset of neurogenesis. Also involved postnatally in the subventricular zone (SVZ) neurogenesis by regulating SVZ neuroblasts survival and ependymal wall integrity. May also mediate local repair of brain ventricular wall damage (By similarity).</text>
</comment>
<comment type="subunit">
    <text evidence="2 3 6">Interacts with SIAH1 (By similarity). Interacts with LNX (By similarity). Interacts with CDH1 (By similarity). Interacts with TFAP2A and TFAP2B (PubMed:17022975). Interacts with RALBP1 in a complex also containing EPN1 and TFAP2A during interphase and mitosis (By similarity). Interacts with AAK1 (By similarity). May interact with DUOXA1 (By similarity).</text>
</comment>
<comment type="subcellular location">
    <subcellularLocation>
        <location evidence="2">Cell membrane</location>
        <topology evidence="2">Peripheral membrane protein</topology>
        <orientation evidence="2">Cytoplasmic side</orientation>
    </subcellularLocation>
    <subcellularLocation>
        <location evidence="2">Endosome membrane</location>
        <topology evidence="2">Peripheral membrane protein</topology>
        <orientation evidence="2">Cytoplasmic side</orientation>
    </subcellularLocation>
    <text evidence="2">Localizes to perinuclear endosomes in an AAK1-dependent manner.</text>
</comment>
<comment type="alternative products">
    <event type="alternative splicing"/>
    <isoform>
        <id>Q2LC84-1</id>
        <name>1</name>
        <name>i/i</name>
        <sequence type="displayed"/>
    </isoform>
    <isoform>
        <id>Q2LC84-2</id>
        <name>2</name>
        <sequence type="described" ref="VSP_041811"/>
    </isoform>
</comment>
<comment type="PTM">
    <text evidence="6">Phosphorylated on Ser-275 and Ser-294 by CaMK1.</text>
</comment>
<comment type="PTM">
    <text evidence="1">Isoform 1 and isoform 2 are ubiquitinated by LNX leading to their subsequent proteasomal degradation. Ubiquitinated; mediated by SIAH1 and leading to its subsequent proteasomal degradation.</text>
</comment>
<gene>
    <name type="primary">Numb</name>
</gene>
<protein>
    <recommendedName>
        <fullName>Protein numb homolog</fullName>
    </recommendedName>
</protein>